<name>COAD_BACVZ</name>
<proteinExistence type="inferred from homology"/>
<organism>
    <name type="scientific">Bacillus velezensis (strain DSM 23117 / BGSC 10A6 / LMG 26770 / FZB42)</name>
    <name type="common">Bacillus amyloliquefaciens subsp. plantarum</name>
    <dbReference type="NCBI Taxonomy" id="326423"/>
    <lineage>
        <taxon>Bacteria</taxon>
        <taxon>Bacillati</taxon>
        <taxon>Bacillota</taxon>
        <taxon>Bacilli</taxon>
        <taxon>Bacillales</taxon>
        <taxon>Bacillaceae</taxon>
        <taxon>Bacillus</taxon>
        <taxon>Bacillus amyloliquefaciens group</taxon>
    </lineage>
</organism>
<protein>
    <recommendedName>
        <fullName evidence="1">Phosphopantetheine adenylyltransferase</fullName>
        <ecNumber evidence="1">2.7.7.3</ecNumber>
    </recommendedName>
    <alternativeName>
        <fullName evidence="1">Dephospho-CoA pyrophosphorylase</fullName>
    </alternativeName>
    <alternativeName>
        <fullName evidence="1">Pantetheine-phosphate adenylyltransferase</fullName>
        <shortName evidence="1">PPAT</shortName>
    </alternativeName>
</protein>
<feature type="chain" id="PRO_1000011091" description="Phosphopantetheine adenylyltransferase">
    <location>
        <begin position="1"/>
        <end position="160"/>
    </location>
</feature>
<feature type="binding site" evidence="1">
    <location>
        <begin position="10"/>
        <end position="11"/>
    </location>
    <ligand>
        <name>ATP</name>
        <dbReference type="ChEBI" id="CHEBI:30616"/>
    </ligand>
</feature>
<feature type="binding site" evidence="1">
    <location>
        <position position="10"/>
    </location>
    <ligand>
        <name>substrate</name>
    </ligand>
</feature>
<feature type="binding site" evidence="1">
    <location>
        <position position="18"/>
    </location>
    <ligand>
        <name>ATP</name>
        <dbReference type="ChEBI" id="CHEBI:30616"/>
    </ligand>
</feature>
<feature type="binding site" evidence="1">
    <location>
        <position position="42"/>
    </location>
    <ligand>
        <name>substrate</name>
    </ligand>
</feature>
<feature type="binding site" evidence="1">
    <location>
        <position position="74"/>
    </location>
    <ligand>
        <name>substrate</name>
    </ligand>
</feature>
<feature type="binding site" evidence="1">
    <location>
        <position position="88"/>
    </location>
    <ligand>
        <name>substrate</name>
    </ligand>
</feature>
<feature type="binding site" evidence="1">
    <location>
        <begin position="89"/>
        <end position="91"/>
    </location>
    <ligand>
        <name>ATP</name>
        <dbReference type="ChEBI" id="CHEBI:30616"/>
    </ligand>
</feature>
<feature type="binding site" evidence="1">
    <location>
        <position position="99"/>
    </location>
    <ligand>
        <name>ATP</name>
        <dbReference type="ChEBI" id="CHEBI:30616"/>
    </ligand>
</feature>
<feature type="binding site" evidence="1">
    <location>
        <begin position="124"/>
        <end position="130"/>
    </location>
    <ligand>
        <name>ATP</name>
        <dbReference type="ChEBI" id="CHEBI:30616"/>
    </ligand>
</feature>
<feature type="site" description="Transition state stabilizer" evidence="1">
    <location>
        <position position="18"/>
    </location>
</feature>
<keyword id="KW-0067">ATP-binding</keyword>
<keyword id="KW-0173">Coenzyme A biosynthesis</keyword>
<keyword id="KW-0963">Cytoplasm</keyword>
<keyword id="KW-0460">Magnesium</keyword>
<keyword id="KW-0547">Nucleotide-binding</keyword>
<keyword id="KW-0548">Nucleotidyltransferase</keyword>
<keyword id="KW-0808">Transferase</keyword>
<accession>A7Z4C5</accession>
<comment type="function">
    <text evidence="1">Reversibly transfers an adenylyl group from ATP to 4'-phosphopantetheine, yielding dephospho-CoA (dPCoA) and pyrophosphate.</text>
</comment>
<comment type="catalytic activity">
    <reaction evidence="1">
        <text>(R)-4'-phosphopantetheine + ATP + H(+) = 3'-dephospho-CoA + diphosphate</text>
        <dbReference type="Rhea" id="RHEA:19801"/>
        <dbReference type="ChEBI" id="CHEBI:15378"/>
        <dbReference type="ChEBI" id="CHEBI:30616"/>
        <dbReference type="ChEBI" id="CHEBI:33019"/>
        <dbReference type="ChEBI" id="CHEBI:57328"/>
        <dbReference type="ChEBI" id="CHEBI:61723"/>
        <dbReference type="EC" id="2.7.7.3"/>
    </reaction>
</comment>
<comment type="cofactor">
    <cofactor evidence="1">
        <name>Mg(2+)</name>
        <dbReference type="ChEBI" id="CHEBI:18420"/>
    </cofactor>
</comment>
<comment type="pathway">
    <text evidence="1">Cofactor biosynthesis; coenzyme A biosynthesis; CoA from (R)-pantothenate: step 4/5.</text>
</comment>
<comment type="subunit">
    <text evidence="1">Homohexamer.</text>
</comment>
<comment type="subcellular location">
    <subcellularLocation>
        <location evidence="1">Cytoplasm</location>
    </subcellularLocation>
</comment>
<comment type="similarity">
    <text evidence="1">Belongs to the bacterial CoaD family.</text>
</comment>
<sequence length="160" mass="18028">MASIAVCPGSFDPVTYGHLDIIRRGANVFEQVYVCVLNNSSKQPLFTVEERCELLREVTKDIPNVTVETSQGLLIDYAKKKRAKAIIRGLRAVSDFEYEMQGTSVNRVLDESIETFFMMTNNQYSFLSSSIVKEVAKYNGPVSEFVPPEVEQALMQKFKG</sequence>
<dbReference type="EC" id="2.7.7.3" evidence="1"/>
<dbReference type="EMBL" id="CP000560">
    <property type="protein sequence ID" value="ABS73851.1"/>
    <property type="molecule type" value="Genomic_DNA"/>
</dbReference>
<dbReference type="RefSeq" id="WP_007409694.1">
    <property type="nucleotide sequence ID" value="NC_009725.2"/>
</dbReference>
<dbReference type="SMR" id="A7Z4C5"/>
<dbReference type="GeneID" id="93080621"/>
<dbReference type="KEGG" id="bay:RBAM_014880"/>
<dbReference type="HOGENOM" id="CLU_100149_0_1_9"/>
<dbReference type="UniPathway" id="UPA00241">
    <property type="reaction ID" value="UER00355"/>
</dbReference>
<dbReference type="Proteomes" id="UP000001120">
    <property type="component" value="Chromosome"/>
</dbReference>
<dbReference type="GO" id="GO:0005737">
    <property type="term" value="C:cytoplasm"/>
    <property type="evidence" value="ECO:0007669"/>
    <property type="project" value="UniProtKB-SubCell"/>
</dbReference>
<dbReference type="GO" id="GO:0005524">
    <property type="term" value="F:ATP binding"/>
    <property type="evidence" value="ECO:0007669"/>
    <property type="project" value="UniProtKB-KW"/>
</dbReference>
<dbReference type="GO" id="GO:0004595">
    <property type="term" value="F:pantetheine-phosphate adenylyltransferase activity"/>
    <property type="evidence" value="ECO:0007669"/>
    <property type="project" value="UniProtKB-UniRule"/>
</dbReference>
<dbReference type="GO" id="GO:0015937">
    <property type="term" value="P:coenzyme A biosynthetic process"/>
    <property type="evidence" value="ECO:0007669"/>
    <property type="project" value="UniProtKB-UniRule"/>
</dbReference>
<dbReference type="CDD" id="cd02163">
    <property type="entry name" value="PPAT"/>
    <property type="match status" value="1"/>
</dbReference>
<dbReference type="FunFam" id="3.40.50.620:FF:000012">
    <property type="entry name" value="Phosphopantetheine adenylyltransferase"/>
    <property type="match status" value="1"/>
</dbReference>
<dbReference type="Gene3D" id="3.40.50.620">
    <property type="entry name" value="HUPs"/>
    <property type="match status" value="1"/>
</dbReference>
<dbReference type="HAMAP" id="MF_00151">
    <property type="entry name" value="PPAT_bact"/>
    <property type="match status" value="1"/>
</dbReference>
<dbReference type="InterPro" id="IPR004821">
    <property type="entry name" value="Cyt_trans-like"/>
</dbReference>
<dbReference type="InterPro" id="IPR001980">
    <property type="entry name" value="PPAT"/>
</dbReference>
<dbReference type="InterPro" id="IPR014729">
    <property type="entry name" value="Rossmann-like_a/b/a_fold"/>
</dbReference>
<dbReference type="NCBIfam" id="TIGR01510">
    <property type="entry name" value="coaD_prev_kdtB"/>
    <property type="match status" value="1"/>
</dbReference>
<dbReference type="NCBIfam" id="TIGR00125">
    <property type="entry name" value="cyt_tran_rel"/>
    <property type="match status" value="1"/>
</dbReference>
<dbReference type="PANTHER" id="PTHR21342">
    <property type="entry name" value="PHOSPHOPANTETHEINE ADENYLYLTRANSFERASE"/>
    <property type="match status" value="1"/>
</dbReference>
<dbReference type="PANTHER" id="PTHR21342:SF1">
    <property type="entry name" value="PHOSPHOPANTETHEINE ADENYLYLTRANSFERASE"/>
    <property type="match status" value="1"/>
</dbReference>
<dbReference type="Pfam" id="PF01467">
    <property type="entry name" value="CTP_transf_like"/>
    <property type="match status" value="1"/>
</dbReference>
<dbReference type="PRINTS" id="PR01020">
    <property type="entry name" value="LPSBIOSNTHSS"/>
</dbReference>
<dbReference type="SUPFAM" id="SSF52374">
    <property type="entry name" value="Nucleotidylyl transferase"/>
    <property type="match status" value="1"/>
</dbReference>
<evidence type="ECO:0000255" key="1">
    <source>
        <dbReference type="HAMAP-Rule" id="MF_00151"/>
    </source>
</evidence>
<reference key="1">
    <citation type="journal article" date="2007" name="Nat. Biotechnol.">
        <title>Comparative analysis of the complete genome sequence of the plant growth-promoting bacterium Bacillus amyloliquefaciens FZB42.</title>
        <authorList>
            <person name="Chen X.H."/>
            <person name="Koumoutsi A."/>
            <person name="Scholz R."/>
            <person name="Eisenreich A."/>
            <person name="Schneider K."/>
            <person name="Heinemeyer I."/>
            <person name="Morgenstern B."/>
            <person name="Voss B."/>
            <person name="Hess W.R."/>
            <person name="Reva O."/>
            <person name="Junge H."/>
            <person name="Voigt B."/>
            <person name="Jungblut P.R."/>
            <person name="Vater J."/>
            <person name="Suessmuth R."/>
            <person name="Liesegang H."/>
            <person name="Strittmatter A."/>
            <person name="Gottschalk G."/>
            <person name="Borriss R."/>
        </authorList>
    </citation>
    <scope>NUCLEOTIDE SEQUENCE [LARGE SCALE GENOMIC DNA]</scope>
    <source>
        <strain>DSM 23117 / BGSC 10A6 / LMG 26770 / FZB42</strain>
    </source>
</reference>
<gene>
    <name evidence="1" type="primary">coaD</name>
    <name type="ordered locus">RBAM_014880</name>
</gene>